<gene>
    <name type="primary">AKR4C9</name>
    <name type="ordered locus">At2g37770</name>
    <name type="ORF">F13M22</name>
    <name type="ORF">T8P21.32</name>
</gene>
<protein>
    <recommendedName>
        <fullName evidence="5">NADPH-dependent aldo-keto reductase, chloroplastic</fullName>
        <shortName evidence="5">AtChlAKR</shortName>
        <ecNumber evidence="2 3">1.1.1.-</ecNumber>
    </recommendedName>
    <alternativeName>
        <fullName>Aldo-keto reductase family 4 member C9</fullName>
    </alternativeName>
</protein>
<comment type="function">
    <text evidence="2 3">Oxidoreductase acting on a broad range of substrates: reduces ketosteroids, aromatic aldehydes, ketones, sugars and other aliphatic aldehydes, and oxidizes hydroxysteroids (PubMed:19616008). Aldehyde reductase that catalyzes the reduction of the aldehyde carbonyl groups on saturated and alpha,beta-unsaturated aldehydes (PubMed:21169366). No activity on alpha,beta-unsaturated ketones (PubMed:21169366). Can use propionaldehyde, butyraldehyde, methylglyoxal, (E)-2-pentenal, (E)-2-hexenal, (Z)-3-hexenal and (E)-2-nonenal as substrates, propenal (acrolein), crotonaldehyde, but not 2-butanone, 3-buten-2-one or 1-penten-3-one (PubMed:21169366). May function as detoxifiying enzyme by reducing a range of toxic aldehydes and ketones produced during stress (PubMed:19616008).</text>
</comment>
<comment type="biophysicochemical properties">
    <kinetics>
        <KM evidence="2">1445 uM for benzaldehyde</KM>
        <KM evidence="2">102 uM for 3-fluorobenzaldehyde</KM>
        <KM evidence="2">270 uM for cinnamylaldehyde</KM>
        <KM evidence="2">261 uM for 3-hydroxybenzaldehyde</KM>
        <KM evidence="2">82 uM for isopropylbenzaldehyde</KM>
        <KM evidence="2">4.4 uM for 9,10-phenanthrenequinone</KM>
        <KM evidence="2">5.49 mM for 2-E-hexenal</KM>
        <KM evidence="2">4 mM for 4-hydroxy-2-nonenal</KM>
        <KM evidence="2">51 mM for malondialdehyde</KM>
        <KM evidence="2">0.46 mM for methylglyoxal</KM>
        <KM evidence="2">2.2 mM for glyceraldehyde</KM>
        <KM evidence="2">10.2 mM for glyoxal</KM>
        <KM evidence="2">2.8 mM for erythrose</KM>
        <KM evidence="2">238 mM for xylose</KM>
        <KM evidence="2">240 mM for arabinose</KM>
        <KM evidence="2">760 mM for glucose</KM>
        <KM evidence="2">121 mM for galactose</KM>
        <KM evidence="3">70 mM for propionaldehyde</KM>
        <KM evidence="3">6.9 mM for butyraldehyde</KM>
        <KM evidence="3">2.6 mM for acrolein</KM>
        <KM evidence="3">1.63 mM for crotonaldehyde</KM>
        <KM evidence="3">0.63 mM for (E)-2-pentenal</KM>
        <KM evidence="3">0.72 mM for (E)-2-hexenal</KM>
        <KM evidence="3">1.67 mM for (E)-2-nonenal</KM>
        <KM evidence="3">0.24 mM for methylglyoxal</KM>
        <text evidence="3">kcat is 44 sec(-1) for propionaldehyde. kcat is 21 sec(-1) for butyraldehyde. kcat is 6.6 sec(-1) for acrolein. kcat is 18 sec(-1) for crotonaldehyde. kcat is 9.5 sec(-1) for (E)-2-pentenal. kcat is 7.3 sec(-1) for (E)-2-hexenal. kcat is 7.9 sec(-1) for (E)-2-nonenal. kcat is 11.5 sec(-1) for methylglyoxal.</text>
    </kinetics>
</comment>
<comment type="subcellular location">
    <subcellularLocation>
        <location evidence="3">Plastid</location>
        <location evidence="3">Chloroplast</location>
    </subcellularLocation>
</comment>
<comment type="alternative products">
    <event type="alternative splicing"/>
    <isoform>
        <id>Q0PGJ6-1</id>
        <name>1</name>
        <sequence type="displayed"/>
    </isoform>
    <isoform>
        <id>Q0PGJ6-2</id>
        <name>2</name>
        <sequence type="described" ref="VSP_040016 VSP_040017"/>
    </isoform>
</comment>
<comment type="induction">
    <text evidence="2">By drought, salt and cold stresses.</text>
</comment>
<comment type="similarity">
    <text evidence="6">Belongs to the aldo/keto reductase family.</text>
</comment>
<comment type="sequence caution" evidence="6">
    <conflict type="erroneous gene model prediction">
        <sequence resource="EMBL-CDS" id="AAC23647"/>
    </conflict>
</comment>
<comment type="sequence caution" evidence="6">
    <conflict type="miscellaneous discrepancy">
        <sequence resource="EMBL" id="BX820913"/>
    </conflict>
    <text>Sequencing errors.</text>
</comment>
<accession>Q0PGJ6</accession>
<accession>O80945</accession>
<accession>Q2V420</accession>
<accession>Q84W94</accession>
<organism>
    <name type="scientific">Arabidopsis thaliana</name>
    <name type="common">Mouse-ear cress</name>
    <dbReference type="NCBI Taxonomy" id="3702"/>
    <lineage>
        <taxon>Eukaryota</taxon>
        <taxon>Viridiplantae</taxon>
        <taxon>Streptophyta</taxon>
        <taxon>Embryophyta</taxon>
        <taxon>Tracheophyta</taxon>
        <taxon>Spermatophyta</taxon>
        <taxon>Magnoliopsida</taxon>
        <taxon>eudicotyledons</taxon>
        <taxon>Gunneridae</taxon>
        <taxon>Pentapetalae</taxon>
        <taxon>rosids</taxon>
        <taxon>malvids</taxon>
        <taxon>Brassicales</taxon>
        <taxon>Brassicaceae</taxon>
        <taxon>Camelineae</taxon>
        <taxon>Arabidopsis</taxon>
    </lineage>
</organism>
<sequence>MANAITFFKLNTGAKFPSVGLGTWQASPGLVGDAVAAAVKIGYRHIDCAQIYGNEKEIGAVLKKLFEDRVVKREDLFITSKLWCTDHDPQDVPEALNRTLKDLQLEYVDLYLIHWPARIKKGSVGIKPENLLPVDIPSTWKAMEALYDSGKARAIGVSNFSTKKLADLLELARVPPAVNQVECHPSWRQTKLQEFCKSKGVHLSAYSPLGSPGTTWLKSDVLKNPILNMVAEKLGKSPAQVALRWGLQMGHSVLPKSTNEGRIKENFNVFDWSIPDYMFAKFAEIEQARLVTGSFLVHETLSPYKSIEELWDGEI</sequence>
<reference key="1">
    <citation type="journal article" date="2009" name="J. Mol. Biol.">
        <title>Characterization of two novel aldo-keto reductases from Arabidopsis: expression patterns, broad substrate specificity, and an open active-site structure suggest a role in toxicant metabolism following stress.</title>
        <authorList>
            <person name="Simpson P.J."/>
            <person name="Tantitadapitak C."/>
            <person name="Reed A.M."/>
            <person name="Mather O.C."/>
            <person name="Bunce C.M."/>
            <person name="White S.A."/>
            <person name="Ride J.P."/>
        </authorList>
    </citation>
    <scope>NUCLEOTIDE SEQUENCE [MRNA] (ISOFORM 1)</scope>
    <scope>X-RAY CRYSTALLOGRAPHY (1.25 ANGSTROMS) IN COMPLEX WITH NADP</scope>
    <scope>FUNCTION</scope>
    <scope>BIOPHYSICOCHEMICAL PROPERTIES</scope>
    <scope>INDUCTION</scope>
    <source>
        <strain>cv. Columbia</strain>
        <tissue>Flower bud</tissue>
    </source>
</reference>
<reference key="2">
    <citation type="journal article" date="1999" name="Nature">
        <title>Sequence and analysis of chromosome 2 of the plant Arabidopsis thaliana.</title>
        <authorList>
            <person name="Lin X."/>
            <person name="Kaul S."/>
            <person name="Rounsley S.D."/>
            <person name="Shea T.P."/>
            <person name="Benito M.-I."/>
            <person name="Town C.D."/>
            <person name="Fujii C.Y."/>
            <person name="Mason T.M."/>
            <person name="Bowman C.L."/>
            <person name="Barnstead M.E."/>
            <person name="Feldblyum T.V."/>
            <person name="Buell C.R."/>
            <person name="Ketchum K.A."/>
            <person name="Lee J.J."/>
            <person name="Ronning C.M."/>
            <person name="Koo H.L."/>
            <person name="Moffat K.S."/>
            <person name="Cronin L.A."/>
            <person name="Shen M."/>
            <person name="Pai G."/>
            <person name="Van Aken S."/>
            <person name="Umayam L."/>
            <person name="Tallon L.J."/>
            <person name="Gill J.E."/>
            <person name="Adams M.D."/>
            <person name="Carrera A.J."/>
            <person name="Creasy T.H."/>
            <person name="Goodman H.M."/>
            <person name="Somerville C.R."/>
            <person name="Copenhaver G.P."/>
            <person name="Preuss D."/>
            <person name="Nierman W.C."/>
            <person name="White O."/>
            <person name="Eisen J.A."/>
            <person name="Salzberg S.L."/>
            <person name="Fraser C.M."/>
            <person name="Venter J.C."/>
        </authorList>
    </citation>
    <scope>NUCLEOTIDE SEQUENCE [LARGE SCALE GENOMIC DNA]</scope>
    <source>
        <strain>cv. Columbia</strain>
    </source>
</reference>
<reference key="3">
    <citation type="journal article" date="2017" name="Plant J.">
        <title>Araport11: a complete reannotation of the Arabidopsis thaliana reference genome.</title>
        <authorList>
            <person name="Cheng C.Y."/>
            <person name="Krishnakumar V."/>
            <person name="Chan A.P."/>
            <person name="Thibaud-Nissen F."/>
            <person name="Schobel S."/>
            <person name="Town C.D."/>
        </authorList>
    </citation>
    <scope>GENOME REANNOTATION</scope>
    <source>
        <strain>cv. Columbia</strain>
    </source>
</reference>
<reference key="4">
    <citation type="journal article" date="2004" name="Genome Res.">
        <title>Whole genome sequence comparisons and 'full-length' cDNA sequences: a combined approach to evaluate and improve Arabidopsis genome annotation.</title>
        <authorList>
            <person name="Castelli V."/>
            <person name="Aury J.-M."/>
            <person name="Jaillon O."/>
            <person name="Wincker P."/>
            <person name="Clepet C."/>
            <person name="Menard M."/>
            <person name="Cruaud C."/>
            <person name="Quetier F."/>
            <person name="Scarpelli C."/>
            <person name="Schaechter V."/>
            <person name="Temple G."/>
            <person name="Caboche M."/>
            <person name="Weissenbach J."/>
            <person name="Salanoubat M."/>
        </authorList>
    </citation>
    <scope>NUCLEOTIDE SEQUENCE [LARGE SCALE MRNA] (ISOFORM 2)</scope>
    <source>
        <strain>cv. Columbia</strain>
    </source>
</reference>
<reference key="5">
    <citation type="journal article" date="2003" name="Science">
        <title>Empirical analysis of transcriptional activity in the Arabidopsis genome.</title>
        <authorList>
            <person name="Yamada K."/>
            <person name="Lim J."/>
            <person name="Dale J.M."/>
            <person name="Chen H."/>
            <person name="Shinn P."/>
            <person name="Palm C.J."/>
            <person name="Southwick A.M."/>
            <person name="Wu H.C."/>
            <person name="Kim C.J."/>
            <person name="Nguyen M."/>
            <person name="Pham P.K."/>
            <person name="Cheuk R.F."/>
            <person name="Karlin-Newmann G."/>
            <person name="Liu S.X."/>
            <person name="Lam B."/>
            <person name="Sakano H."/>
            <person name="Wu T."/>
            <person name="Yu G."/>
            <person name="Miranda M."/>
            <person name="Quach H.L."/>
            <person name="Tripp M."/>
            <person name="Chang C.H."/>
            <person name="Lee J.M."/>
            <person name="Toriumi M.J."/>
            <person name="Chan M.M."/>
            <person name="Tang C.C."/>
            <person name="Onodera C.S."/>
            <person name="Deng J.M."/>
            <person name="Akiyama K."/>
            <person name="Ansari Y."/>
            <person name="Arakawa T."/>
            <person name="Banh J."/>
            <person name="Banno F."/>
            <person name="Bowser L."/>
            <person name="Brooks S.Y."/>
            <person name="Carninci P."/>
            <person name="Chao Q."/>
            <person name="Choy N."/>
            <person name="Enju A."/>
            <person name="Goldsmith A.D."/>
            <person name="Gurjal M."/>
            <person name="Hansen N.F."/>
            <person name="Hayashizaki Y."/>
            <person name="Johnson-Hopson C."/>
            <person name="Hsuan V.W."/>
            <person name="Iida K."/>
            <person name="Karnes M."/>
            <person name="Khan S."/>
            <person name="Koesema E."/>
            <person name="Ishida J."/>
            <person name="Jiang P.X."/>
            <person name="Jones T."/>
            <person name="Kawai J."/>
            <person name="Kamiya A."/>
            <person name="Meyers C."/>
            <person name="Nakajima M."/>
            <person name="Narusaka M."/>
            <person name="Seki M."/>
            <person name="Sakurai T."/>
            <person name="Satou M."/>
            <person name="Tamse R."/>
            <person name="Vaysberg M."/>
            <person name="Wallender E.K."/>
            <person name="Wong C."/>
            <person name="Yamamura Y."/>
            <person name="Yuan S."/>
            <person name="Shinozaki K."/>
            <person name="Davis R.W."/>
            <person name="Theologis A."/>
            <person name="Ecker J.R."/>
        </authorList>
    </citation>
    <scope>NUCLEOTIDE SEQUENCE [LARGE SCALE MRNA] OF 12-315 (ISOFORM 1)</scope>
    <source>
        <strain>cv. Columbia</strain>
    </source>
</reference>
<reference key="6">
    <citation type="journal article" date="2011" name="J. Biol. Chem.">
        <title>NADPH-dependent reductases involved in the detoxification of reactive carbonyls in plants.</title>
        <authorList>
            <person name="Yamauchi Y."/>
            <person name="Hasegawa A."/>
            <person name="Taninaka A."/>
            <person name="Mizutani M."/>
            <person name="Sugimoto Y."/>
        </authorList>
    </citation>
    <scope>FUNCTION</scope>
    <scope>SUBSTRATE SPECIFICITY</scope>
    <scope>SUBCELLULAR LOCATION</scope>
    <scope>BIOPHYSICOCHEMICAL PROPERTIES</scope>
</reference>
<reference key="7">
    <citation type="journal article" date="2012" name="Mol. Cell. Proteomics">
        <title>Comparative large-scale characterisation of plant vs. mammal proteins reveals similar and idiosyncratic N-alpha acetylation features.</title>
        <authorList>
            <person name="Bienvenut W.V."/>
            <person name="Sumpton D."/>
            <person name="Martinez A."/>
            <person name="Lilla S."/>
            <person name="Espagne C."/>
            <person name="Meinnel T."/>
            <person name="Giglione C."/>
        </authorList>
    </citation>
    <scope>ACETYLATION [LARGE SCALE ANALYSIS] AT ALA-2</scope>
    <scope>CLEAVAGE OF INITIATOR METHIONINE [LARGE SCALE ANALYSIS]</scope>
    <scope>IDENTIFICATION BY MASS SPECTROMETRY [LARGE SCALE ANALYSIS]</scope>
</reference>
<dbReference type="EC" id="1.1.1.-" evidence="2 3"/>
<dbReference type="EMBL" id="DQ837654">
    <property type="protein sequence ID" value="ABH07515.1"/>
    <property type="molecule type" value="mRNA"/>
</dbReference>
<dbReference type="EMBL" id="AC004684">
    <property type="protein sequence ID" value="AAC23647.1"/>
    <property type="status" value="ALT_SEQ"/>
    <property type="molecule type" value="Genomic_DNA"/>
</dbReference>
<dbReference type="EMBL" id="CP002685">
    <property type="protein sequence ID" value="AEC09448.1"/>
    <property type="molecule type" value="Genomic_DNA"/>
</dbReference>
<dbReference type="EMBL" id="CP002685">
    <property type="protein sequence ID" value="AEC09449.1"/>
    <property type="molecule type" value="Genomic_DNA"/>
</dbReference>
<dbReference type="EMBL" id="BX820913">
    <property type="status" value="NOT_ANNOTATED_CDS"/>
    <property type="molecule type" value="mRNA"/>
</dbReference>
<dbReference type="EMBL" id="BT004098">
    <property type="protein sequence ID" value="AAO42123.1"/>
    <property type="molecule type" value="mRNA"/>
</dbReference>
<dbReference type="PIR" id="T02543">
    <property type="entry name" value="T02543"/>
</dbReference>
<dbReference type="RefSeq" id="NP_001031505.1">
    <molecule id="Q0PGJ6-1"/>
    <property type="nucleotide sequence ID" value="NM_001036428.3"/>
</dbReference>
<dbReference type="RefSeq" id="NP_181313.3">
    <molecule id="Q0PGJ6-2"/>
    <property type="nucleotide sequence ID" value="NM_129333.3"/>
</dbReference>
<dbReference type="PDB" id="3H7U">
    <property type="method" value="X-ray"/>
    <property type="resolution" value="1.25 A"/>
    <property type="chains" value="A=1-315"/>
</dbReference>
<dbReference type="PDBsum" id="3H7U"/>
<dbReference type="SMR" id="Q0PGJ6"/>
<dbReference type="FunCoup" id="Q0PGJ6">
    <property type="interactions" value="1782"/>
</dbReference>
<dbReference type="STRING" id="3702.Q0PGJ6"/>
<dbReference type="iPTMnet" id="Q0PGJ6"/>
<dbReference type="PaxDb" id="3702-AT2G37770.2"/>
<dbReference type="ProteomicsDB" id="244822">
    <molecule id="Q0PGJ6-1"/>
</dbReference>
<dbReference type="EnsemblPlants" id="AT2G37770.1">
    <molecule id="Q0PGJ6-2"/>
    <property type="protein sequence ID" value="AT2G37770.1"/>
    <property type="gene ID" value="AT2G37770"/>
</dbReference>
<dbReference type="EnsemblPlants" id="AT2G37770.2">
    <molecule id="Q0PGJ6-1"/>
    <property type="protein sequence ID" value="AT2G37770.2"/>
    <property type="gene ID" value="AT2G37770"/>
</dbReference>
<dbReference type="GeneID" id="818354"/>
<dbReference type="Gramene" id="AT2G37770.1">
    <molecule id="Q0PGJ6-2"/>
    <property type="protein sequence ID" value="AT2G37770.1"/>
    <property type="gene ID" value="AT2G37770"/>
</dbReference>
<dbReference type="Gramene" id="AT2G37770.2">
    <molecule id="Q0PGJ6-1"/>
    <property type="protein sequence ID" value="AT2G37770.2"/>
    <property type="gene ID" value="AT2G37770"/>
</dbReference>
<dbReference type="KEGG" id="ath:AT2G37770"/>
<dbReference type="Araport" id="AT2G37770"/>
<dbReference type="TAIR" id="AT2G37770">
    <property type="gene designation" value="CHLAKR"/>
</dbReference>
<dbReference type="eggNOG" id="KOG1577">
    <property type="taxonomic scope" value="Eukaryota"/>
</dbReference>
<dbReference type="HOGENOM" id="CLU_023205_0_0_1"/>
<dbReference type="InParanoid" id="Q0PGJ6"/>
<dbReference type="OMA" id="VHWPSEG"/>
<dbReference type="OrthoDB" id="416253at2759"/>
<dbReference type="PhylomeDB" id="Q0PGJ6"/>
<dbReference type="BioCyc" id="ARA:AT2G37770-MONOMER"/>
<dbReference type="BioCyc" id="MetaCyc:AT2G37770-MONOMER"/>
<dbReference type="SABIO-RK" id="Q0PGJ6"/>
<dbReference type="EvolutionaryTrace" id="Q0PGJ6"/>
<dbReference type="PRO" id="PR:Q0PGJ6"/>
<dbReference type="Proteomes" id="UP000006548">
    <property type="component" value="Chromosome 2"/>
</dbReference>
<dbReference type="ExpressionAtlas" id="Q0PGJ6">
    <property type="expression patterns" value="baseline and differential"/>
</dbReference>
<dbReference type="GO" id="GO:0009507">
    <property type="term" value="C:chloroplast"/>
    <property type="evidence" value="ECO:0000314"/>
    <property type="project" value="TAIR"/>
</dbReference>
<dbReference type="GO" id="GO:0005783">
    <property type="term" value="C:endoplasmic reticulum"/>
    <property type="evidence" value="ECO:0007005"/>
    <property type="project" value="TAIR"/>
</dbReference>
<dbReference type="GO" id="GO:0008106">
    <property type="term" value="F:alcohol dehydrogenase (NADP+) activity"/>
    <property type="evidence" value="ECO:0000314"/>
    <property type="project" value="TAIR"/>
</dbReference>
<dbReference type="GO" id="GO:0004033">
    <property type="term" value="F:aldo-keto reductase (NADPH) activity"/>
    <property type="evidence" value="ECO:0000314"/>
    <property type="project" value="UniProtKB"/>
</dbReference>
<dbReference type="GO" id="GO:0070401">
    <property type="term" value="F:NADP+ binding"/>
    <property type="evidence" value="ECO:0000314"/>
    <property type="project" value="UniProtKB"/>
</dbReference>
<dbReference type="GO" id="GO:0016229">
    <property type="term" value="F:steroid dehydrogenase activity"/>
    <property type="evidence" value="ECO:0000314"/>
    <property type="project" value="UniProtKB"/>
</dbReference>
<dbReference type="GO" id="GO:0009409">
    <property type="term" value="P:response to cold"/>
    <property type="evidence" value="ECO:0000270"/>
    <property type="project" value="UniProtKB"/>
</dbReference>
<dbReference type="GO" id="GO:0009651">
    <property type="term" value="P:response to salt stress"/>
    <property type="evidence" value="ECO:0000270"/>
    <property type="project" value="UniProtKB"/>
</dbReference>
<dbReference type="GO" id="GO:0009636">
    <property type="term" value="P:response to toxic substance"/>
    <property type="evidence" value="ECO:0007669"/>
    <property type="project" value="UniProtKB-KW"/>
</dbReference>
<dbReference type="GO" id="GO:0009414">
    <property type="term" value="P:response to water deprivation"/>
    <property type="evidence" value="ECO:0000270"/>
    <property type="project" value="UniProtKB"/>
</dbReference>
<dbReference type="CDD" id="cd19125">
    <property type="entry name" value="AKR_AKR4C1-15"/>
    <property type="match status" value="1"/>
</dbReference>
<dbReference type="FunFam" id="3.20.20.100:FF:000010">
    <property type="entry name" value="NADPH-dependent aldo-keto reductase, chloroplastic"/>
    <property type="match status" value="1"/>
</dbReference>
<dbReference type="Gene3D" id="3.20.20.100">
    <property type="entry name" value="NADP-dependent oxidoreductase domain"/>
    <property type="match status" value="1"/>
</dbReference>
<dbReference type="InterPro" id="IPR020471">
    <property type="entry name" value="AKR"/>
</dbReference>
<dbReference type="InterPro" id="IPR044498">
    <property type="entry name" value="AKR4C"/>
</dbReference>
<dbReference type="InterPro" id="IPR018170">
    <property type="entry name" value="Aldo/ket_reductase_CS"/>
</dbReference>
<dbReference type="InterPro" id="IPR023210">
    <property type="entry name" value="NADP_OxRdtase_dom"/>
</dbReference>
<dbReference type="InterPro" id="IPR036812">
    <property type="entry name" value="NADP_OxRdtase_dom_sf"/>
</dbReference>
<dbReference type="PANTHER" id="PTHR11732">
    <property type="entry name" value="ALDO/KETO REDUCTASE"/>
    <property type="match status" value="1"/>
</dbReference>
<dbReference type="Pfam" id="PF00248">
    <property type="entry name" value="Aldo_ket_red"/>
    <property type="match status" value="1"/>
</dbReference>
<dbReference type="PIRSF" id="PIRSF000097">
    <property type="entry name" value="AKR"/>
    <property type="match status" value="1"/>
</dbReference>
<dbReference type="PRINTS" id="PR00069">
    <property type="entry name" value="ALDKETRDTASE"/>
</dbReference>
<dbReference type="SUPFAM" id="SSF51430">
    <property type="entry name" value="NAD(P)-linked oxidoreductase"/>
    <property type="match status" value="1"/>
</dbReference>
<dbReference type="PROSITE" id="PS00798">
    <property type="entry name" value="ALDOKETO_REDUCTASE_1"/>
    <property type="match status" value="1"/>
</dbReference>
<dbReference type="PROSITE" id="PS00062">
    <property type="entry name" value="ALDOKETO_REDUCTASE_2"/>
    <property type="match status" value="1"/>
</dbReference>
<dbReference type="PROSITE" id="PS00063">
    <property type="entry name" value="ALDOKETO_REDUCTASE_3"/>
    <property type="match status" value="1"/>
</dbReference>
<name>AKRC9_ARATH</name>
<evidence type="ECO:0000250" key="1"/>
<evidence type="ECO:0000269" key="2">
    <source>
    </source>
</evidence>
<evidence type="ECO:0000269" key="3">
    <source>
    </source>
</evidence>
<evidence type="ECO:0000303" key="4">
    <source>
    </source>
</evidence>
<evidence type="ECO:0000303" key="5">
    <source>
    </source>
</evidence>
<evidence type="ECO:0000305" key="6"/>
<evidence type="ECO:0007744" key="7">
    <source>
    </source>
</evidence>
<evidence type="ECO:0007829" key="8">
    <source>
        <dbReference type="PDB" id="3H7U"/>
    </source>
</evidence>
<feature type="initiator methionine" description="Removed" evidence="7">
    <location>
        <position position="1"/>
    </location>
</feature>
<feature type="chain" id="PRO_0000400313" description="NADPH-dependent aldo-keto reductase, chloroplastic">
    <location>
        <begin position="2"/>
        <end position="315"/>
    </location>
</feature>
<feature type="active site" description="Proton donor" evidence="1">
    <location>
        <position position="52"/>
    </location>
</feature>
<feature type="binding site" evidence="2">
    <location>
        <begin position="23"/>
        <end position="24"/>
    </location>
    <ligand>
        <name>NADP(+)</name>
        <dbReference type="ChEBI" id="CHEBI:58349"/>
    </ligand>
</feature>
<feature type="binding site" evidence="2">
    <location>
        <position position="47"/>
    </location>
    <ligand>
        <name>NADP(+)</name>
        <dbReference type="ChEBI" id="CHEBI:58349"/>
    </ligand>
</feature>
<feature type="binding site" evidence="1">
    <location>
        <position position="114"/>
    </location>
    <ligand>
        <name>NADP(+)</name>
        <dbReference type="ChEBI" id="CHEBI:58349"/>
    </ligand>
</feature>
<feature type="binding site" evidence="2">
    <location>
        <begin position="158"/>
        <end position="159"/>
    </location>
    <ligand>
        <name>NADP(+)</name>
        <dbReference type="ChEBI" id="CHEBI:58349"/>
    </ligand>
</feature>
<feature type="binding site" evidence="2">
    <location>
        <position position="180"/>
    </location>
    <ligand>
        <name>NADP(+)</name>
        <dbReference type="ChEBI" id="CHEBI:58349"/>
    </ligand>
</feature>
<feature type="binding site" evidence="2">
    <location>
        <begin position="207"/>
        <end position="213"/>
    </location>
    <ligand>
        <name>NADP(+)</name>
        <dbReference type="ChEBI" id="CHEBI:58349"/>
    </ligand>
</feature>
<feature type="binding site" evidence="2">
    <location>
        <begin position="256"/>
        <end position="258"/>
    </location>
    <ligand>
        <name>NADP(+)</name>
        <dbReference type="ChEBI" id="CHEBI:58349"/>
    </ligand>
</feature>
<feature type="binding site" evidence="2">
    <location>
        <begin position="262"/>
        <end position="266"/>
    </location>
    <ligand>
        <name>NADP(+)</name>
        <dbReference type="ChEBI" id="CHEBI:58349"/>
    </ligand>
</feature>
<feature type="modified residue" description="N-acetylalanine" evidence="7">
    <location>
        <position position="2"/>
    </location>
</feature>
<feature type="splice variant" id="VSP_040016" description="In isoform 2." evidence="4">
    <original>AYSPLGSPGTTWLKSDVLKNPILNMVAEKLGKSPAQVALRWGLQMGHSVLPKSTNEGRIKENFNVFDWSIPDYMFAKFA</original>
    <variation>VSITRLTNPFTFYFIHSLNDFFFPGILAIRFSRDNMAEERCFEEPDTEYGCGKTRKESCASRPSLGTPNGSQCASQEYK</variation>
    <location>
        <begin position="205"/>
        <end position="283"/>
    </location>
</feature>
<feature type="splice variant" id="VSP_040017" description="In isoform 2." evidence="4">
    <location>
        <begin position="284"/>
        <end position="315"/>
    </location>
</feature>
<feature type="strand" evidence="8">
    <location>
        <begin position="7"/>
        <end position="9"/>
    </location>
</feature>
<feature type="strand" evidence="8">
    <location>
        <begin position="15"/>
        <end position="19"/>
    </location>
</feature>
<feature type="helix" evidence="8">
    <location>
        <begin position="28"/>
        <end position="41"/>
    </location>
</feature>
<feature type="strand" evidence="8">
    <location>
        <begin position="45"/>
        <end position="47"/>
    </location>
</feature>
<feature type="helix" evidence="8">
    <location>
        <begin position="50"/>
        <end position="52"/>
    </location>
</feature>
<feature type="helix" evidence="8">
    <location>
        <begin position="55"/>
        <end position="67"/>
    </location>
</feature>
<feature type="helix" evidence="8">
    <location>
        <begin position="73"/>
        <end position="75"/>
    </location>
</feature>
<feature type="strand" evidence="8">
    <location>
        <begin position="77"/>
        <end position="82"/>
    </location>
</feature>
<feature type="helix" evidence="8">
    <location>
        <begin position="84"/>
        <end position="86"/>
    </location>
</feature>
<feature type="helix" evidence="8">
    <location>
        <begin position="91"/>
        <end position="103"/>
    </location>
</feature>
<feature type="strand" evidence="8">
    <location>
        <begin position="108"/>
        <end position="113"/>
    </location>
</feature>
<feature type="helix" evidence="8">
    <location>
        <begin position="128"/>
        <end position="130"/>
    </location>
</feature>
<feature type="helix" evidence="8">
    <location>
        <begin position="136"/>
        <end position="148"/>
    </location>
</feature>
<feature type="strand" evidence="8">
    <location>
        <begin position="151"/>
        <end position="159"/>
    </location>
</feature>
<feature type="helix" evidence="8">
    <location>
        <begin position="162"/>
        <end position="171"/>
    </location>
</feature>
<feature type="strand" evidence="8">
    <location>
        <begin position="177"/>
        <end position="182"/>
    </location>
</feature>
<feature type="helix" evidence="8">
    <location>
        <begin position="190"/>
        <end position="199"/>
    </location>
</feature>
<feature type="strand" evidence="8">
    <location>
        <begin position="202"/>
        <end position="207"/>
    </location>
</feature>
<feature type="helix" evidence="8">
    <location>
        <begin position="221"/>
        <end position="223"/>
    </location>
</feature>
<feature type="helix" evidence="8">
    <location>
        <begin position="225"/>
        <end position="234"/>
    </location>
</feature>
<feature type="helix" evidence="8">
    <location>
        <begin position="238"/>
        <end position="248"/>
    </location>
</feature>
<feature type="helix" evidence="8">
    <location>
        <begin position="260"/>
        <end position="267"/>
    </location>
</feature>
<feature type="helix" evidence="8">
    <location>
        <begin position="276"/>
        <end position="281"/>
    </location>
</feature>
<feature type="helix" evidence="8">
    <location>
        <begin position="282"/>
        <end position="284"/>
    </location>
</feature>
<feature type="helix" evidence="8">
    <location>
        <begin position="294"/>
        <end position="296"/>
    </location>
</feature>
<feature type="turn" evidence="8">
    <location>
        <begin position="299"/>
        <end position="301"/>
    </location>
</feature>
<feature type="strand" evidence="8">
    <location>
        <begin position="302"/>
        <end position="306"/>
    </location>
</feature>
<feature type="helix" evidence="8">
    <location>
        <begin position="307"/>
        <end position="310"/>
    </location>
</feature>
<feature type="turn" evidence="8">
    <location>
        <begin position="311"/>
        <end position="313"/>
    </location>
</feature>
<proteinExistence type="evidence at protein level"/>
<keyword id="KW-0002">3D-structure</keyword>
<keyword id="KW-0007">Acetylation</keyword>
<keyword id="KW-0025">Alternative splicing</keyword>
<keyword id="KW-0150">Chloroplast</keyword>
<keyword id="KW-0216">Detoxification</keyword>
<keyword id="KW-0521">NADP</keyword>
<keyword id="KW-0560">Oxidoreductase</keyword>
<keyword id="KW-0934">Plastid</keyword>
<keyword id="KW-1185">Reference proteome</keyword>
<keyword id="KW-0346">Stress response</keyword>